<name>SYA_ECOLC</name>
<evidence type="ECO:0000255" key="1">
    <source>
        <dbReference type="HAMAP-Rule" id="MF_00036"/>
    </source>
</evidence>
<sequence length="876" mass="96016">MSKSTAEIRQAFLDFFHSKGHQVVASSSLVPHNDPTLLFTNAGMNQFKDVFLGLDKRNYSRATTSQRCVRAGGKHNDLENVGYTARHHTFFEMLGNFSFGDYFKHDAIQFAWELLTSEKWFALPKERLWVTVYESDDEAYEIWEKEVGIPRERIIRIGDNKGAPYASDNFWQMGDTGPCGPCTEIFYDHGDHIWGGPPGSPEEDGDRYIEIWNIVFMQFNRQADGTMEPLPKPSVDTGMGLERIAAVLQHVNSNYDIDLFRTLIQAVAKVTGATDLSNKSLRVIADHIRSCAFLIADGVMPANENRGYVLRRIIRRAVRHGNMLGAKETFFYKLVGPLIDVMGSAGEDLKRQQAQVEQVLKTEEEQFARTLERGLALLDEELAKLSGDTLDGETAFRLYDTYGFPVDLTADVCRERNIKVDEAGFEAAMEEQRRRAREASGFGADYNAMIRVDSASEFKGYDHLELNGKVTALFVDGKAVDAINAGQEAVVVLDQTPFYAESGGQVGDKGELKGANFSFAVEDTQKYGQAIGHIGKLAAGSLKVGDAVQADVDEARRARIRLNHSATHLMHAALRQVLGTHVSQKGSLVNDKVLRFDFSHNEAMKPEEIRAVEDLVNTQIRRNLPIETNIMDLEAAKAKGAMALFGEKYDERVRVLSMGDFSTELCGGTHASRTGDIGLFRIISESGTAAGVRRIEAVTGEGAIATVHADSDRLSEVAHLLKGDSNNLADKVRSVLERTRQLEKELQQLKEQAAAQESANLSSKAIDVNGVKLLVSELSGVEPKMLRTMVDDLKNQLGSTIIVLATVVEGKVSLIAGVSKDVTDRVKAGELIGMVAQQVGGKGGGRPDMAQAGGTDAAALPAALASVKGWVSAKLQ</sequence>
<reference key="1">
    <citation type="submission" date="2008-02" db="EMBL/GenBank/DDBJ databases">
        <title>Complete sequence of Escherichia coli C str. ATCC 8739.</title>
        <authorList>
            <person name="Copeland A."/>
            <person name="Lucas S."/>
            <person name="Lapidus A."/>
            <person name="Glavina del Rio T."/>
            <person name="Dalin E."/>
            <person name="Tice H."/>
            <person name="Bruce D."/>
            <person name="Goodwin L."/>
            <person name="Pitluck S."/>
            <person name="Kiss H."/>
            <person name="Brettin T."/>
            <person name="Detter J.C."/>
            <person name="Han C."/>
            <person name="Kuske C.R."/>
            <person name="Schmutz J."/>
            <person name="Larimer F."/>
            <person name="Land M."/>
            <person name="Hauser L."/>
            <person name="Kyrpides N."/>
            <person name="Mikhailova N."/>
            <person name="Ingram L."/>
            <person name="Richardson P."/>
        </authorList>
    </citation>
    <scope>NUCLEOTIDE SEQUENCE [LARGE SCALE GENOMIC DNA]</scope>
    <source>
        <strain>ATCC 8739 / DSM 1576 / NBRC 3972 / NCIMB 8545 / WDCM 00012 / Crooks</strain>
    </source>
</reference>
<comment type="function">
    <text evidence="1">Catalyzes the attachment of alanine to tRNA(Ala) in a two-step reaction: alanine is first activated by ATP to form Ala-AMP and then transferred to the acceptor end of tRNA(Ala). Also edits incorrectly charged Ser-tRNA(Ala) and Gly-tRNA(Ala) via its editing domain.</text>
</comment>
<comment type="catalytic activity">
    <reaction evidence="1">
        <text>tRNA(Ala) + L-alanine + ATP = L-alanyl-tRNA(Ala) + AMP + diphosphate</text>
        <dbReference type="Rhea" id="RHEA:12540"/>
        <dbReference type="Rhea" id="RHEA-COMP:9657"/>
        <dbReference type="Rhea" id="RHEA-COMP:9923"/>
        <dbReference type="ChEBI" id="CHEBI:30616"/>
        <dbReference type="ChEBI" id="CHEBI:33019"/>
        <dbReference type="ChEBI" id="CHEBI:57972"/>
        <dbReference type="ChEBI" id="CHEBI:78442"/>
        <dbReference type="ChEBI" id="CHEBI:78497"/>
        <dbReference type="ChEBI" id="CHEBI:456215"/>
        <dbReference type="EC" id="6.1.1.7"/>
    </reaction>
</comment>
<comment type="cofactor">
    <cofactor evidence="1">
        <name>Zn(2+)</name>
        <dbReference type="ChEBI" id="CHEBI:29105"/>
    </cofactor>
    <text evidence="1">Binds 1 zinc ion per subunit.</text>
</comment>
<comment type="subunit">
    <text evidence="1">Homotetramer.</text>
</comment>
<comment type="subcellular location">
    <subcellularLocation>
        <location evidence="1">Cytoplasm</location>
    </subcellularLocation>
</comment>
<comment type="domain">
    <text evidence="1">Consists of three domains; the N-terminal catalytic domain, the editing domain and the C-terminal C-Ala domain. The editing domain removes incorrectly charged amino acids, while the C-Ala domain, along with tRNA(Ala), serves as a bridge to cooperatively bring together the editing and aminoacylation centers thus stimulating deacylation of misacylated tRNAs.</text>
</comment>
<comment type="similarity">
    <text evidence="1">Belongs to the class-II aminoacyl-tRNA synthetase family.</text>
</comment>
<protein>
    <recommendedName>
        <fullName evidence="1">Alanine--tRNA ligase</fullName>
        <ecNumber evidence="1">6.1.1.7</ecNumber>
    </recommendedName>
    <alternativeName>
        <fullName evidence="1">Alanyl-tRNA synthetase</fullName>
        <shortName evidence="1">AlaRS</shortName>
    </alternativeName>
</protein>
<organism>
    <name type="scientific">Escherichia coli (strain ATCC 8739 / DSM 1576 / NBRC 3972 / NCIMB 8545 / WDCM 00012 / Crooks)</name>
    <dbReference type="NCBI Taxonomy" id="481805"/>
    <lineage>
        <taxon>Bacteria</taxon>
        <taxon>Pseudomonadati</taxon>
        <taxon>Pseudomonadota</taxon>
        <taxon>Gammaproteobacteria</taxon>
        <taxon>Enterobacterales</taxon>
        <taxon>Enterobacteriaceae</taxon>
        <taxon>Escherichia</taxon>
    </lineage>
</organism>
<dbReference type="EC" id="6.1.1.7" evidence="1"/>
<dbReference type="EMBL" id="CP000946">
    <property type="protein sequence ID" value="ACA76684.1"/>
    <property type="molecule type" value="Genomic_DNA"/>
</dbReference>
<dbReference type="RefSeq" id="WP_000047155.1">
    <property type="nucleotide sequence ID" value="NC_010468.1"/>
</dbReference>
<dbReference type="SMR" id="B1IUY2"/>
<dbReference type="KEGG" id="ecl:EcolC_1015"/>
<dbReference type="HOGENOM" id="CLU_004485_1_1_6"/>
<dbReference type="GO" id="GO:0005829">
    <property type="term" value="C:cytosol"/>
    <property type="evidence" value="ECO:0007669"/>
    <property type="project" value="TreeGrafter"/>
</dbReference>
<dbReference type="GO" id="GO:0004813">
    <property type="term" value="F:alanine-tRNA ligase activity"/>
    <property type="evidence" value="ECO:0007669"/>
    <property type="project" value="UniProtKB-UniRule"/>
</dbReference>
<dbReference type="GO" id="GO:0002161">
    <property type="term" value="F:aminoacyl-tRNA deacylase activity"/>
    <property type="evidence" value="ECO:0007669"/>
    <property type="project" value="TreeGrafter"/>
</dbReference>
<dbReference type="GO" id="GO:0005524">
    <property type="term" value="F:ATP binding"/>
    <property type="evidence" value="ECO:0007669"/>
    <property type="project" value="UniProtKB-UniRule"/>
</dbReference>
<dbReference type="GO" id="GO:0000049">
    <property type="term" value="F:tRNA binding"/>
    <property type="evidence" value="ECO:0007669"/>
    <property type="project" value="UniProtKB-KW"/>
</dbReference>
<dbReference type="GO" id="GO:0008270">
    <property type="term" value="F:zinc ion binding"/>
    <property type="evidence" value="ECO:0007669"/>
    <property type="project" value="UniProtKB-UniRule"/>
</dbReference>
<dbReference type="GO" id="GO:0006419">
    <property type="term" value="P:alanyl-tRNA aminoacylation"/>
    <property type="evidence" value="ECO:0007669"/>
    <property type="project" value="UniProtKB-UniRule"/>
</dbReference>
<dbReference type="GO" id="GO:0045892">
    <property type="term" value="P:negative regulation of DNA-templated transcription"/>
    <property type="evidence" value="ECO:0007669"/>
    <property type="project" value="TreeGrafter"/>
</dbReference>
<dbReference type="CDD" id="cd00673">
    <property type="entry name" value="AlaRS_core"/>
    <property type="match status" value="1"/>
</dbReference>
<dbReference type="FunFam" id="2.40.30.130:FF:000001">
    <property type="entry name" value="Alanine--tRNA ligase"/>
    <property type="match status" value="1"/>
</dbReference>
<dbReference type="FunFam" id="3.10.310.40:FF:000001">
    <property type="entry name" value="Alanine--tRNA ligase"/>
    <property type="match status" value="1"/>
</dbReference>
<dbReference type="FunFam" id="3.30.54.20:FF:000001">
    <property type="entry name" value="Alanine--tRNA ligase"/>
    <property type="match status" value="1"/>
</dbReference>
<dbReference type="FunFam" id="3.30.930.10:FF:000004">
    <property type="entry name" value="Alanine--tRNA ligase"/>
    <property type="match status" value="1"/>
</dbReference>
<dbReference type="FunFam" id="3.30.980.10:FF:000004">
    <property type="entry name" value="Alanine--tRNA ligase, cytoplasmic"/>
    <property type="match status" value="1"/>
</dbReference>
<dbReference type="Gene3D" id="2.40.30.130">
    <property type="match status" value="1"/>
</dbReference>
<dbReference type="Gene3D" id="3.10.310.40">
    <property type="match status" value="1"/>
</dbReference>
<dbReference type="Gene3D" id="3.30.54.20">
    <property type="match status" value="1"/>
</dbReference>
<dbReference type="Gene3D" id="6.10.250.550">
    <property type="match status" value="1"/>
</dbReference>
<dbReference type="Gene3D" id="3.30.930.10">
    <property type="entry name" value="Bira Bifunctional Protein, Domain 2"/>
    <property type="match status" value="1"/>
</dbReference>
<dbReference type="Gene3D" id="3.30.980.10">
    <property type="entry name" value="Threonyl-trna Synthetase, Chain A, domain 2"/>
    <property type="match status" value="1"/>
</dbReference>
<dbReference type="HAMAP" id="MF_00036_B">
    <property type="entry name" value="Ala_tRNA_synth_B"/>
    <property type="match status" value="1"/>
</dbReference>
<dbReference type="InterPro" id="IPR045864">
    <property type="entry name" value="aa-tRNA-synth_II/BPL/LPL"/>
</dbReference>
<dbReference type="InterPro" id="IPR002318">
    <property type="entry name" value="Ala-tRNA-lgiase_IIc"/>
</dbReference>
<dbReference type="InterPro" id="IPR018162">
    <property type="entry name" value="Ala-tRNA-ligase_IIc_anticod-bd"/>
</dbReference>
<dbReference type="InterPro" id="IPR018165">
    <property type="entry name" value="Ala-tRNA-synth_IIc_core"/>
</dbReference>
<dbReference type="InterPro" id="IPR018164">
    <property type="entry name" value="Ala-tRNA-synth_IIc_N"/>
</dbReference>
<dbReference type="InterPro" id="IPR050058">
    <property type="entry name" value="Ala-tRNA_ligase"/>
</dbReference>
<dbReference type="InterPro" id="IPR023033">
    <property type="entry name" value="Ala_tRNA_ligase_euk/bac"/>
</dbReference>
<dbReference type="InterPro" id="IPR003156">
    <property type="entry name" value="DHHA1_dom"/>
</dbReference>
<dbReference type="InterPro" id="IPR018163">
    <property type="entry name" value="Thr/Ala-tRNA-synth_IIc_edit"/>
</dbReference>
<dbReference type="InterPro" id="IPR009000">
    <property type="entry name" value="Transl_B-barrel_sf"/>
</dbReference>
<dbReference type="InterPro" id="IPR012947">
    <property type="entry name" value="tRNA_SAD"/>
</dbReference>
<dbReference type="NCBIfam" id="TIGR00344">
    <property type="entry name" value="alaS"/>
    <property type="match status" value="1"/>
</dbReference>
<dbReference type="PANTHER" id="PTHR11777:SF9">
    <property type="entry name" value="ALANINE--TRNA LIGASE, CYTOPLASMIC"/>
    <property type="match status" value="1"/>
</dbReference>
<dbReference type="PANTHER" id="PTHR11777">
    <property type="entry name" value="ALANYL-TRNA SYNTHETASE"/>
    <property type="match status" value="1"/>
</dbReference>
<dbReference type="Pfam" id="PF02272">
    <property type="entry name" value="DHHA1"/>
    <property type="match status" value="1"/>
</dbReference>
<dbReference type="Pfam" id="PF01411">
    <property type="entry name" value="tRNA-synt_2c"/>
    <property type="match status" value="1"/>
</dbReference>
<dbReference type="Pfam" id="PF07973">
    <property type="entry name" value="tRNA_SAD"/>
    <property type="match status" value="1"/>
</dbReference>
<dbReference type="PRINTS" id="PR00980">
    <property type="entry name" value="TRNASYNTHALA"/>
</dbReference>
<dbReference type="SMART" id="SM00863">
    <property type="entry name" value="tRNA_SAD"/>
    <property type="match status" value="1"/>
</dbReference>
<dbReference type="SUPFAM" id="SSF55681">
    <property type="entry name" value="Class II aaRS and biotin synthetases"/>
    <property type="match status" value="1"/>
</dbReference>
<dbReference type="SUPFAM" id="SSF101353">
    <property type="entry name" value="Putative anticodon-binding domain of alanyl-tRNA synthetase (AlaRS)"/>
    <property type="match status" value="1"/>
</dbReference>
<dbReference type="SUPFAM" id="SSF55186">
    <property type="entry name" value="ThrRS/AlaRS common domain"/>
    <property type="match status" value="1"/>
</dbReference>
<dbReference type="SUPFAM" id="SSF50447">
    <property type="entry name" value="Translation proteins"/>
    <property type="match status" value="1"/>
</dbReference>
<dbReference type="PROSITE" id="PS50860">
    <property type="entry name" value="AA_TRNA_LIGASE_II_ALA"/>
    <property type="match status" value="1"/>
</dbReference>
<keyword id="KW-0007">Acetylation</keyword>
<keyword id="KW-0030">Aminoacyl-tRNA synthetase</keyword>
<keyword id="KW-0067">ATP-binding</keyword>
<keyword id="KW-0963">Cytoplasm</keyword>
<keyword id="KW-0436">Ligase</keyword>
<keyword id="KW-0479">Metal-binding</keyword>
<keyword id="KW-0547">Nucleotide-binding</keyword>
<keyword id="KW-0648">Protein biosynthesis</keyword>
<keyword id="KW-0694">RNA-binding</keyword>
<keyword id="KW-0820">tRNA-binding</keyword>
<keyword id="KW-0862">Zinc</keyword>
<accession>B1IUY2</accession>
<feature type="chain" id="PRO_0000347596" description="Alanine--tRNA ligase">
    <location>
        <begin position="1"/>
        <end position="876"/>
    </location>
</feature>
<feature type="binding site" evidence="1">
    <location>
        <position position="564"/>
    </location>
    <ligand>
        <name>Zn(2+)</name>
        <dbReference type="ChEBI" id="CHEBI:29105"/>
    </ligand>
</feature>
<feature type="binding site" evidence="1">
    <location>
        <position position="568"/>
    </location>
    <ligand>
        <name>Zn(2+)</name>
        <dbReference type="ChEBI" id="CHEBI:29105"/>
    </ligand>
</feature>
<feature type="binding site" evidence="1">
    <location>
        <position position="666"/>
    </location>
    <ligand>
        <name>Zn(2+)</name>
        <dbReference type="ChEBI" id="CHEBI:29105"/>
    </ligand>
</feature>
<feature type="binding site" evidence="1">
    <location>
        <position position="670"/>
    </location>
    <ligand>
        <name>Zn(2+)</name>
        <dbReference type="ChEBI" id="CHEBI:29105"/>
    </ligand>
</feature>
<feature type="modified residue" description="N6-acetyllysine" evidence="1">
    <location>
        <position position="74"/>
    </location>
</feature>
<proteinExistence type="inferred from homology"/>
<gene>
    <name evidence="1" type="primary">alaS</name>
    <name type="ordered locus">EcolC_1015</name>
</gene>